<dbReference type="EC" id="2.7.11.32" evidence="1"/>
<dbReference type="EC" id="2.7.4.27" evidence="1"/>
<dbReference type="EMBL" id="AE009948">
    <property type="protein sequence ID" value="AAN00535.1"/>
    <property type="molecule type" value="Genomic_DNA"/>
</dbReference>
<dbReference type="RefSeq" id="NP_688662.1">
    <property type="nucleotide sequence ID" value="NC_004116.1"/>
</dbReference>
<dbReference type="RefSeq" id="WP_000390093.1">
    <property type="nucleotide sequence ID" value="NC_004116.1"/>
</dbReference>
<dbReference type="SMR" id="Q8DY22"/>
<dbReference type="STRING" id="208435.SAG1671"/>
<dbReference type="KEGG" id="sag:SAG1671"/>
<dbReference type="PATRIC" id="fig|208435.3.peg.1680"/>
<dbReference type="HOGENOM" id="CLU_046206_2_1_9"/>
<dbReference type="OrthoDB" id="9782201at2"/>
<dbReference type="Proteomes" id="UP000000821">
    <property type="component" value="Chromosome"/>
</dbReference>
<dbReference type="GO" id="GO:0043531">
    <property type="term" value="F:ADP binding"/>
    <property type="evidence" value="ECO:0007669"/>
    <property type="project" value="UniProtKB-UniRule"/>
</dbReference>
<dbReference type="GO" id="GO:0005524">
    <property type="term" value="F:ATP binding"/>
    <property type="evidence" value="ECO:0007669"/>
    <property type="project" value="InterPro"/>
</dbReference>
<dbReference type="GO" id="GO:0016776">
    <property type="term" value="F:phosphotransferase activity, phosphate group as acceptor"/>
    <property type="evidence" value="ECO:0007669"/>
    <property type="project" value="UniProtKB-UniRule"/>
</dbReference>
<dbReference type="GO" id="GO:0004674">
    <property type="term" value="F:protein serine/threonine kinase activity"/>
    <property type="evidence" value="ECO:0007669"/>
    <property type="project" value="UniProtKB-UniRule"/>
</dbReference>
<dbReference type="HAMAP" id="MF_00921">
    <property type="entry name" value="PDRP"/>
    <property type="match status" value="1"/>
</dbReference>
<dbReference type="InterPro" id="IPR005177">
    <property type="entry name" value="Kinase-pyrophosphorylase"/>
</dbReference>
<dbReference type="InterPro" id="IPR026565">
    <property type="entry name" value="PPDK_reg"/>
</dbReference>
<dbReference type="NCBIfam" id="NF003742">
    <property type="entry name" value="PRK05339.1"/>
    <property type="match status" value="1"/>
</dbReference>
<dbReference type="PANTHER" id="PTHR31756">
    <property type="entry name" value="PYRUVATE, PHOSPHATE DIKINASE REGULATORY PROTEIN 1, CHLOROPLASTIC"/>
    <property type="match status" value="1"/>
</dbReference>
<dbReference type="PANTHER" id="PTHR31756:SF3">
    <property type="entry name" value="PYRUVATE, PHOSPHATE DIKINASE REGULATORY PROTEIN 1, CHLOROPLASTIC"/>
    <property type="match status" value="1"/>
</dbReference>
<dbReference type="Pfam" id="PF03618">
    <property type="entry name" value="Kinase-PPPase"/>
    <property type="match status" value="1"/>
</dbReference>
<keyword id="KW-0418">Kinase</keyword>
<keyword id="KW-0547">Nucleotide-binding</keyword>
<keyword id="KW-1185">Reference proteome</keyword>
<keyword id="KW-0723">Serine/threonine-protein kinase</keyword>
<keyword id="KW-0808">Transferase</keyword>
<organism>
    <name type="scientific">Streptococcus agalactiae serotype V (strain ATCC BAA-611 / 2603 V/R)</name>
    <dbReference type="NCBI Taxonomy" id="208435"/>
    <lineage>
        <taxon>Bacteria</taxon>
        <taxon>Bacillati</taxon>
        <taxon>Bacillota</taxon>
        <taxon>Bacilli</taxon>
        <taxon>Lactobacillales</taxon>
        <taxon>Streptococcaceae</taxon>
        <taxon>Streptococcus</taxon>
    </lineage>
</organism>
<evidence type="ECO:0000255" key="1">
    <source>
        <dbReference type="HAMAP-Rule" id="MF_00921"/>
    </source>
</evidence>
<feature type="chain" id="PRO_0000196731" description="Putative pyruvate, phosphate dikinase regulatory protein">
    <location>
        <begin position="1"/>
        <end position="276"/>
    </location>
</feature>
<feature type="binding site" evidence="1">
    <location>
        <begin position="151"/>
        <end position="158"/>
    </location>
    <ligand>
        <name>ADP</name>
        <dbReference type="ChEBI" id="CHEBI:456216"/>
    </ligand>
</feature>
<accession>Q8DY22</accession>
<sequence length="276" mass="31121">MEDQLTIFIISDSLGETAKAIAKACLSQFPGHDDWHFQRFSYINSQERLEQVFEEASQKTVFMMFSLVDVALASYAQKRCESEHYAYVDLLTNVIQGISRISGIDPLGEPGILRRLDNDYFKRVESIEFAVKYDDGRDPRGILQADLVIIGISRTSKTPLSMFLADKNIKVINIPLVPEVPVPKELRMIDSRRIIGLTNSVDHLNQVRKVRLKSLGLSSTANYASLERILEETRYAEEVMKNLGCPIINVSDKAIEETATIILEILKTNGQVAKNL</sequence>
<protein>
    <recommendedName>
        <fullName evidence="1">Putative pyruvate, phosphate dikinase regulatory protein</fullName>
        <shortName evidence="1">PPDK regulatory protein</shortName>
        <ecNumber evidence="1">2.7.11.32</ecNumber>
        <ecNumber evidence="1">2.7.4.27</ecNumber>
    </recommendedName>
</protein>
<proteinExistence type="inferred from homology"/>
<name>PDRP_STRA5</name>
<reference key="1">
    <citation type="journal article" date="2002" name="Proc. Natl. Acad. Sci. U.S.A.">
        <title>Complete genome sequence and comparative genomic analysis of an emerging human pathogen, serotype V Streptococcus agalactiae.</title>
        <authorList>
            <person name="Tettelin H."/>
            <person name="Masignani V."/>
            <person name="Cieslewicz M.J."/>
            <person name="Eisen J.A."/>
            <person name="Peterson S.N."/>
            <person name="Wessels M.R."/>
            <person name="Paulsen I.T."/>
            <person name="Nelson K.E."/>
            <person name="Margarit I."/>
            <person name="Read T.D."/>
            <person name="Madoff L.C."/>
            <person name="Wolf A.M."/>
            <person name="Beanan M.J."/>
            <person name="Brinkac L.M."/>
            <person name="Daugherty S.C."/>
            <person name="DeBoy R.T."/>
            <person name="Durkin A.S."/>
            <person name="Kolonay J.F."/>
            <person name="Madupu R."/>
            <person name="Lewis M.R."/>
            <person name="Radune D."/>
            <person name="Fedorova N.B."/>
            <person name="Scanlan D."/>
            <person name="Khouri H.M."/>
            <person name="Mulligan S."/>
            <person name="Carty H.A."/>
            <person name="Cline R.T."/>
            <person name="Van Aken S.E."/>
            <person name="Gill J."/>
            <person name="Scarselli M."/>
            <person name="Mora M."/>
            <person name="Iacobini E.T."/>
            <person name="Brettoni C."/>
            <person name="Galli G."/>
            <person name="Mariani M."/>
            <person name="Vegni F."/>
            <person name="Maione D."/>
            <person name="Rinaudo D."/>
            <person name="Rappuoli R."/>
            <person name="Telford J.L."/>
            <person name="Kasper D.L."/>
            <person name="Grandi G."/>
            <person name="Fraser C.M."/>
        </authorList>
    </citation>
    <scope>NUCLEOTIDE SEQUENCE [LARGE SCALE GENOMIC DNA]</scope>
    <source>
        <strain>ATCC BAA-611 / 2603 V/R</strain>
    </source>
</reference>
<gene>
    <name type="ordered locus">SAG1671</name>
</gene>
<comment type="function">
    <text evidence="1">Bifunctional serine/threonine kinase and phosphorylase involved in the regulation of the pyruvate, phosphate dikinase (PPDK) by catalyzing its phosphorylation/dephosphorylation.</text>
</comment>
<comment type="catalytic activity">
    <reaction evidence="1">
        <text>N(tele)-phospho-L-histidyl/L-threonyl-[pyruvate, phosphate dikinase] + ADP = N(tele)-phospho-L-histidyl/O-phospho-L-threonyl-[pyruvate, phosphate dikinase] + AMP + H(+)</text>
        <dbReference type="Rhea" id="RHEA:43692"/>
        <dbReference type="Rhea" id="RHEA-COMP:10650"/>
        <dbReference type="Rhea" id="RHEA-COMP:10651"/>
        <dbReference type="ChEBI" id="CHEBI:15378"/>
        <dbReference type="ChEBI" id="CHEBI:30013"/>
        <dbReference type="ChEBI" id="CHEBI:61977"/>
        <dbReference type="ChEBI" id="CHEBI:83586"/>
        <dbReference type="ChEBI" id="CHEBI:456215"/>
        <dbReference type="ChEBI" id="CHEBI:456216"/>
        <dbReference type="EC" id="2.7.11.32"/>
    </reaction>
</comment>
<comment type="catalytic activity">
    <reaction evidence="1">
        <text>N(tele)-phospho-L-histidyl/O-phospho-L-threonyl-[pyruvate, phosphate dikinase] + phosphate + H(+) = N(tele)-phospho-L-histidyl/L-threonyl-[pyruvate, phosphate dikinase] + diphosphate</text>
        <dbReference type="Rhea" id="RHEA:43696"/>
        <dbReference type="Rhea" id="RHEA-COMP:10650"/>
        <dbReference type="Rhea" id="RHEA-COMP:10651"/>
        <dbReference type="ChEBI" id="CHEBI:15378"/>
        <dbReference type="ChEBI" id="CHEBI:30013"/>
        <dbReference type="ChEBI" id="CHEBI:33019"/>
        <dbReference type="ChEBI" id="CHEBI:43474"/>
        <dbReference type="ChEBI" id="CHEBI:61977"/>
        <dbReference type="ChEBI" id="CHEBI:83586"/>
        <dbReference type="EC" id="2.7.4.27"/>
    </reaction>
</comment>
<comment type="similarity">
    <text evidence="1">Belongs to the pyruvate, phosphate/water dikinase regulatory protein family. PDRP subfamily.</text>
</comment>